<gene>
    <name type="ORF">PTRG_11154</name>
</gene>
<name>MTLD_PYRTR</name>
<protein>
    <recommendedName>
        <fullName>Mannitol-1-phosphate 5-dehydrogenase</fullName>
        <shortName>M1PDH</shortName>
        <shortName>MPD</shortName>
        <shortName>MPDH</shortName>
        <ecNumber>1.1.1.17</ecNumber>
    </recommendedName>
</protein>
<accession>B2WME4</accession>
<proteinExistence type="inferred from homology"/>
<evidence type="ECO:0000250" key="1"/>
<evidence type="ECO:0000305" key="2"/>
<organism>
    <name type="scientific">Pyrenophora tritici-repentis (strain Pt-1C-BFP)</name>
    <name type="common">Wheat tan spot fungus</name>
    <name type="synonym">Drechslera tritici-repentis</name>
    <dbReference type="NCBI Taxonomy" id="426418"/>
    <lineage>
        <taxon>Eukaryota</taxon>
        <taxon>Fungi</taxon>
        <taxon>Dikarya</taxon>
        <taxon>Ascomycota</taxon>
        <taxon>Pezizomycotina</taxon>
        <taxon>Dothideomycetes</taxon>
        <taxon>Pleosporomycetidae</taxon>
        <taxon>Pleosporales</taxon>
        <taxon>Pleosporineae</taxon>
        <taxon>Pleosporaceae</taxon>
        <taxon>Pyrenophora</taxon>
    </lineage>
</organism>
<feature type="chain" id="PRO_0000371536" description="Mannitol-1-phosphate 5-dehydrogenase">
    <location>
        <begin position="1"/>
        <end position="389"/>
    </location>
</feature>
<feature type="active site" evidence="1">
    <location>
        <position position="216"/>
    </location>
</feature>
<feature type="binding site" evidence="1">
    <location>
        <begin position="7"/>
        <end position="18"/>
    </location>
    <ligand>
        <name>NAD(+)</name>
        <dbReference type="ChEBI" id="CHEBI:57540"/>
    </ligand>
</feature>
<keyword id="KW-0520">NAD</keyword>
<keyword id="KW-0560">Oxidoreductase</keyword>
<keyword id="KW-1185">Reference proteome</keyword>
<comment type="function">
    <text evidence="1">Catalyzes the NAD(H)-dependent interconversion of D-fructose 6-phosphate and D-mannitol 1-phosphate in the mannitol metabolic pathway.</text>
</comment>
<comment type="catalytic activity">
    <reaction>
        <text>D-mannitol 1-phosphate + NAD(+) = beta-D-fructose 6-phosphate + NADH + H(+)</text>
        <dbReference type="Rhea" id="RHEA:19661"/>
        <dbReference type="ChEBI" id="CHEBI:15378"/>
        <dbReference type="ChEBI" id="CHEBI:57540"/>
        <dbReference type="ChEBI" id="CHEBI:57634"/>
        <dbReference type="ChEBI" id="CHEBI:57945"/>
        <dbReference type="ChEBI" id="CHEBI:61381"/>
        <dbReference type="EC" id="1.1.1.17"/>
    </reaction>
</comment>
<comment type="subunit">
    <text evidence="1">Monomer.</text>
</comment>
<comment type="similarity">
    <text evidence="2">Belongs to the mannitol dehydrogenase family.</text>
</comment>
<dbReference type="EC" id="1.1.1.17"/>
<dbReference type="EMBL" id="DS231630">
    <property type="protein sequence ID" value="EDU44204.1"/>
    <property type="molecule type" value="Genomic_DNA"/>
</dbReference>
<dbReference type="RefSeq" id="XP_001941485.1">
    <property type="nucleotide sequence ID" value="XM_001941450.1"/>
</dbReference>
<dbReference type="SMR" id="B2WME4"/>
<dbReference type="STRING" id="426418.B2WME4"/>
<dbReference type="EnsemblFungi" id="EDU44204">
    <property type="protein sequence ID" value="EDU44204"/>
    <property type="gene ID" value="PTRG_11154"/>
</dbReference>
<dbReference type="GeneID" id="6349466"/>
<dbReference type="KEGG" id="ptrr:6349466"/>
<dbReference type="eggNOG" id="ENOG502QVPN">
    <property type="taxonomic scope" value="Eukaryota"/>
</dbReference>
<dbReference type="HOGENOM" id="CLU_036089_0_1_1"/>
<dbReference type="InParanoid" id="B2WME4"/>
<dbReference type="OMA" id="APFIERK"/>
<dbReference type="OrthoDB" id="12399at28556"/>
<dbReference type="Proteomes" id="UP000001471">
    <property type="component" value="Unassembled WGS sequence"/>
</dbReference>
<dbReference type="GO" id="GO:0005829">
    <property type="term" value="C:cytosol"/>
    <property type="evidence" value="ECO:0007669"/>
    <property type="project" value="TreeGrafter"/>
</dbReference>
<dbReference type="GO" id="GO:0008926">
    <property type="term" value="F:mannitol-1-phosphate 5-dehydrogenase activity"/>
    <property type="evidence" value="ECO:0007669"/>
    <property type="project" value="UniProtKB-EC"/>
</dbReference>
<dbReference type="GO" id="GO:0019592">
    <property type="term" value="P:mannitol catabolic process"/>
    <property type="evidence" value="ECO:0007669"/>
    <property type="project" value="TreeGrafter"/>
</dbReference>
<dbReference type="Gene3D" id="1.10.1040.10">
    <property type="entry name" value="N-(1-d-carboxylethyl)-l-norvaline Dehydrogenase, domain 2"/>
    <property type="match status" value="1"/>
</dbReference>
<dbReference type="Gene3D" id="3.40.50.720">
    <property type="entry name" value="NAD(P)-binding Rossmann-like Domain"/>
    <property type="match status" value="1"/>
</dbReference>
<dbReference type="HAMAP" id="MF_00196">
    <property type="entry name" value="Mannitol_dehydrog"/>
    <property type="match status" value="1"/>
</dbReference>
<dbReference type="InterPro" id="IPR008927">
    <property type="entry name" value="6-PGluconate_DH-like_C_sf"/>
</dbReference>
<dbReference type="InterPro" id="IPR013328">
    <property type="entry name" value="6PGD_dom2"/>
</dbReference>
<dbReference type="InterPro" id="IPR023028">
    <property type="entry name" value="Mannitol_1_phos_5_DH"/>
</dbReference>
<dbReference type="InterPro" id="IPR000669">
    <property type="entry name" value="Mannitol_DH"/>
</dbReference>
<dbReference type="InterPro" id="IPR013118">
    <property type="entry name" value="Mannitol_DH_C"/>
</dbReference>
<dbReference type="InterPro" id="IPR013131">
    <property type="entry name" value="Mannitol_DH_N"/>
</dbReference>
<dbReference type="InterPro" id="IPR036291">
    <property type="entry name" value="NAD(P)-bd_dom_sf"/>
</dbReference>
<dbReference type="NCBIfam" id="NF002652">
    <property type="entry name" value="PRK02318.2-5"/>
    <property type="match status" value="1"/>
</dbReference>
<dbReference type="PANTHER" id="PTHR30524:SF0">
    <property type="entry name" value="ALTRONATE OXIDOREDUCTASE-RELATED"/>
    <property type="match status" value="1"/>
</dbReference>
<dbReference type="PANTHER" id="PTHR30524">
    <property type="entry name" value="MANNITOL-1-PHOSPHATE 5-DEHYDROGENASE"/>
    <property type="match status" value="1"/>
</dbReference>
<dbReference type="Pfam" id="PF01232">
    <property type="entry name" value="Mannitol_dh"/>
    <property type="match status" value="1"/>
</dbReference>
<dbReference type="Pfam" id="PF08125">
    <property type="entry name" value="Mannitol_dh_C"/>
    <property type="match status" value="1"/>
</dbReference>
<dbReference type="PRINTS" id="PR00084">
    <property type="entry name" value="MTLDHDRGNASE"/>
</dbReference>
<dbReference type="SUPFAM" id="SSF48179">
    <property type="entry name" value="6-phosphogluconate dehydrogenase C-terminal domain-like"/>
    <property type="match status" value="1"/>
</dbReference>
<dbReference type="SUPFAM" id="SSF51735">
    <property type="entry name" value="NAD(P)-binding Rossmann-fold domains"/>
    <property type="match status" value="1"/>
</dbReference>
<reference key="1">
    <citation type="journal article" date="2013" name="G3 (Bethesda)">
        <title>Comparative genomics of a plant-pathogenic fungus, Pyrenophora tritici-repentis, reveals transduplication and the impact of repeat elements on pathogenicity and population divergence.</title>
        <authorList>
            <person name="Manning V.A."/>
            <person name="Pandelova I."/>
            <person name="Dhillon B."/>
            <person name="Wilhelm L.J."/>
            <person name="Goodwin S.B."/>
            <person name="Berlin A.M."/>
            <person name="Figueroa M."/>
            <person name="Freitag M."/>
            <person name="Hane J.K."/>
            <person name="Henrissat B."/>
            <person name="Holman W.H."/>
            <person name="Kodira C.D."/>
            <person name="Martin J."/>
            <person name="Oliver R.P."/>
            <person name="Robbertse B."/>
            <person name="Schackwitz W."/>
            <person name="Schwartz D.C."/>
            <person name="Spatafora J.W."/>
            <person name="Turgeon B.G."/>
            <person name="Yandava C."/>
            <person name="Young S."/>
            <person name="Zhou S."/>
            <person name="Zeng Q."/>
            <person name="Grigoriev I.V."/>
            <person name="Ma L.-J."/>
            <person name="Ciuffetti L.M."/>
        </authorList>
    </citation>
    <scope>NUCLEOTIDE SEQUENCE [LARGE SCALE GENOMIC DNA]</scope>
    <source>
        <strain>Pt-1C-BFP</strain>
    </source>
</reference>
<sequence length="389" mass="43570">MPYEKKAVHFGGGNIGRGFVAEFLHNSGYEVVFVDVMDSIIESLQKTSTYKVTEIGDDGEREFTIDHYRAINSKNEMDKVIEEIATADVVTCAVGPNILKFVAEPVAKAIEARKLDYPIAVIACENAINATTTWRGFIESKLSEETKKNIDSKARFANSAIDRIVPQQPPNAGLNVVIEKFHEWCVEQKPFENGGKKPDVKGIHYVDDLEPYIERKLFTVNTSHATAAYYGHQNKIAYIHEVLQDKKLHDIVRDAVKETANLIVKKHGVSTQEQSDYVEQIIKRISNPVLKDNVERVGRAPLRKLSRKERFIGPAAQLAERGESYQTLLGAVEQAYRFQNVEGDEESVELAKILKEHSPEEVVTKVNGIEKGHALFDPLVAIVKKVQGS</sequence>